<feature type="chain" id="PRO_0000257830" description="Curing of [URE3] protein 1">
    <location>
        <begin position="1"/>
        <end position="252"/>
    </location>
</feature>
<accession>Q06469</accession>
<accession>D6W4F4</accession>
<gene>
    <name type="primary">CUR1</name>
    <name type="ordered locus">YPR158W</name>
</gene>
<dbReference type="EMBL" id="U28371">
    <property type="protein sequence ID" value="AAB68055.1"/>
    <property type="molecule type" value="Genomic_DNA"/>
</dbReference>
<dbReference type="EMBL" id="BK006949">
    <property type="protein sequence ID" value="DAA11570.1"/>
    <property type="molecule type" value="Genomic_DNA"/>
</dbReference>
<dbReference type="PIR" id="S61142">
    <property type="entry name" value="S61142"/>
</dbReference>
<dbReference type="RefSeq" id="NP_015484.1">
    <property type="nucleotide sequence ID" value="NM_001184255.1"/>
</dbReference>
<dbReference type="BioGRID" id="36325">
    <property type="interactions" value="40"/>
</dbReference>
<dbReference type="FunCoup" id="Q06469">
    <property type="interactions" value="44"/>
</dbReference>
<dbReference type="IntAct" id="Q06469">
    <property type="interactions" value="1"/>
</dbReference>
<dbReference type="STRING" id="4932.YPR158W"/>
<dbReference type="PaxDb" id="4932-YPR158W"/>
<dbReference type="PeptideAtlas" id="Q06469"/>
<dbReference type="EnsemblFungi" id="YPR158W_mRNA">
    <property type="protein sequence ID" value="YPR158W"/>
    <property type="gene ID" value="YPR158W"/>
</dbReference>
<dbReference type="GeneID" id="856281"/>
<dbReference type="KEGG" id="sce:YPR158W"/>
<dbReference type="AGR" id="SGD:S000006362"/>
<dbReference type="SGD" id="S000006362">
    <property type="gene designation" value="CUR1"/>
</dbReference>
<dbReference type="VEuPathDB" id="FungiDB:YPR158W"/>
<dbReference type="HOGENOM" id="CLU_1103307_0_0_1"/>
<dbReference type="InParanoid" id="Q06469"/>
<dbReference type="OMA" id="ENKRQPH"/>
<dbReference type="OrthoDB" id="4043389at2759"/>
<dbReference type="BioCyc" id="YEAST:G3O-34289-MONOMER"/>
<dbReference type="BioGRID-ORCS" id="856281">
    <property type="hits" value="0 hits in 10 CRISPR screens"/>
</dbReference>
<dbReference type="PRO" id="PR:Q06469"/>
<dbReference type="Proteomes" id="UP000002311">
    <property type="component" value="Chromosome XVI"/>
</dbReference>
<dbReference type="RNAct" id="Q06469">
    <property type="molecule type" value="protein"/>
</dbReference>
<dbReference type="GO" id="GO:0005634">
    <property type="term" value="C:nucleus"/>
    <property type="evidence" value="ECO:0000314"/>
    <property type="project" value="SGD"/>
</dbReference>
<dbReference type="GO" id="GO:0051087">
    <property type="term" value="F:protein-folding chaperone binding"/>
    <property type="evidence" value="ECO:0000353"/>
    <property type="project" value="SGD"/>
</dbReference>
<dbReference type="GO" id="GO:0006886">
    <property type="term" value="P:intracellular protein transport"/>
    <property type="evidence" value="ECO:0000315"/>
    <property type="project" value="SGD"/>
</dbReference>
<dbReference type="GO" id="GO:0006457">
    <property type="term" value="P:protein folding"/>
    <property type="evidence" value="ECO:0000315"/>
    <property type="project" value="SGD"/>
</dbReference>
<dbReference type="GO" id="GO:0034504">
    <property type="term" value="P:protein localization to nucleus"/>
    <property type="evidence" value="ECO:0000315"/>
    <property type="project" value="SGD"/>
</dbReference>
<sequence length="252" mass="29163">MAAACICQPNLLEINVSDGPLDMIRKKRKIQQPQLRPPLRENKCQPHFSVRKVNQSYIISLHKEITCQLIAEIVKQKLSRIWEKVYIPSYELISDKDGNQIYVEQSVDENRLTSEIMEKLDPNNIDIEAIEILFDDYHLELSRLTNGIIISSANDHFYREFSFNNIIDDNFKICGTSMSADSFDKIYGVMWIEVPFNGNGLQNDSAVNRVSTSHNQIEELNDIEQEIRAFNISRSNQESIIKKEVSRRLNGR</sequence>
<comment type="function">
    <text evidence="1">Involved in the curing of prion [URE3]. Nuclear localization of this protein may suggest a role in transcription regulation, so it might exert an effect on [URE3] through known prion-curing chaperones or BTN2.</text>
</comment>
<comment type="subcellular location">
    <subcellularLocation>
        <location evidence="1">Nucleus</location>
    </subcellularLocation>
</comment>
<name>CUR1_YEAST</name>
<organism>
    <name type="scientific">Saccharomyces cerevisiae (strain ATCC 204508 / S288c)</name>
    <name type="common">Baker's yeast</name>
    <dbReference type="NCBI Taxonomy" id="559292"/>
    <lineage>
        <taxon>Eukaryota</taxon>
        <taxon>Fungi</taxon>
        <taxon>Dikarya</taxon>
        <taxon>Ascomycota</taxon>
        <taxon>Saccharomycotina</taxon>
        <taxon>Saccharomycetes</taxon>
        <taxon>Saccharomycetales</taxon>
        <taxon>Saccharomycetaceae</taxon>
        <taxon>Saccharomyces</taxon>
    </lineage>
</organism>
<reference key="1">
    <citation type="journal article" date="1997" name="Nature">
        <title>The nucleotide sequence of Saccharomyces cerevisiae chromosome XVI.</title>
        <authorList>
            <person name="Bussey H."/>
            <person name="Storms R.K."/>
            <person name="Ahmed A."/>
            <person name="Albermann K."/>
            <person name="Allen E."/>
            <person name="Ansorge W."/>
            <person name="Araujo R."/>
            <person name="Aparicio A."/>
            <person name="Barrell B.G."/>
            <person name="Badcock K."/>
            <person name="Benes V."/>
            <person name="Botstein D."/>
            <person name="Bowman S."/>
            <person name="Brueckner M."/>
            <person name="Carpenter J."/>
            <person name="Cherry J.M."/>
            <person name="Chung E."/>
            <person name="Churcher C.M."/>
            <person name="Coster F."/>
            <person name="Davis K."/>
            <person name="Davis R.W."/>
            <person name="Dietrich F.S."/>
            <person name="Delius H."/>
            <person name="DiPaolo T."/>
            <person name="Dubois E."/>
            <person name="Duesterhoeft A."/>
            <person name="Duncan M."/>
            <person name="Floeth M."/>
            <person name="Fortin N."/>
            <person name="Friesen J.D."/>
            <person name="Fritz C."/>
            <person name="Goffeau A."/>
            <person name="Hall J."/>
            <person name="Hebling U."/>
            <person name="Heumann K."/>
            <person name="Hilbert H."/>
            <person name="Hillier L.W."/>
            <person name="Hunicke-Smith S."/>
            <person name="Hyman R.W."/>
            <person name="Johnston M."/>
            <person name="Kalman S."/>
            <person name="Kleine K."/>
            <person name="Komp C."/>
            <person name="Kurdi O."/>
            <person name="Lashkari D."/>
            <person name="Lew H."/>
            <person name="Lin A."/>
            <person name="Lin D."/>
            <person name="Louis E.J."/>
            <person name="Marathe R."/>
            <person name="Messenguy F."/>
            <person name="Mewes H.-W."/>
            <person name="Mirtipati S."/>
            <person name="Moestl D."/>
            <person name="Mueller-Auer S."/>
            <person name="Namath A."/>
            <person name="Nentwich U."/>
            <person name="Oefner P."/>
            <person name="Pearson D."/>
            <person name="Petel F.X."/>
            <person name="Pohl T.M."/>
            <person name="Purnelle B."/>
            <person name="Rajandream M.A."/>
            <person name="Rechmann S."/>
            <person name="Rieger M."/>
            <person name="Riles L."/>
            <person name="Roberts D."/>
            <person name="Schaefer M."/>
            <person name="Scharfe M."/>
            <person name="Scherens B."/>
            <person name="Schramm S."/>
            <person name="Schroeder M."/>
            <person name="Sdicu A.-M."/>
            <person name="Tettelin H."/>
            <person name="Urrestarazu L.A."/>
            <person name="Ushinsky S."/>
            <person name="Vierendeels F."/>
            <person name="Vissers S."/>
            <person name="Voss H."/>
            <person name="Walsh S.V."/>
            <person name="Wambutt R."/>
            <person name="Wang Y."/>
            <person name="Wedler E."/>
            <person name="Wedler H."/>
            <person name="Winnett E."/>
            <person name="Zhong W.-W."/>
            <person name="Zollner A."/>
            <person name="Vo D.H."/>
            <person name="Hani J."/>
        </authorList>
    </citation>
    <scope>NUCLEOTIDE SEQUENCE [LARGE SCALE GENOMIC DNA]</scope>
    <source>
        <strain>ATCC 204508 / S288c</strain>
    </source>
</reference>
<reference key="2">
    <citation type="journal article" date="2014" name="G3 (Bethesda)">
        <title>The reference genome sequence of Saccharomyces cerevisiae: Then and now.</title>
        <authorList>
            <person name="Engel S.R."/>
            <person name="Dietrich F.S."/>
            <person name="Fisk D.G."/>
            <person name="Binkley G."/>
            <person name="Balakrishnan R."/>
            <person name="Costanzo M.C."/>
            <person name="Dwight S.S."/>
            <person name="Hitz B.C."/>
            <person name="Karra K."/>
            <person name="Nash R.S."/>
            <person name="Weng S."/>
            <person name="Wong E.D."/>
            <person name="Lloyd P."/>
            <person name="Skrzypek M.S."/>
            <person name="Miyasato S.R."/>
            <person name="Simison M."/>
            <person name="Cherry J.M."/>
        </authorList>
    </citation>
    <scope>GENOME REANNOTATION</scope>
    <source>
        <strain>ATCC 204508 / S288c</strain>
    </source>
</reference>
<reference key="3">
    <citation type="journal article" date="2008" name="EMBO J.">
        <title>Curing of the [URE3] prion by Btn2p, a Batten disease-related protein.</title>
        <authorList>
            <person name="Kryndushkin D.S."/>
            <person name="Shewmaker F."/>
            <person name="Wickner R.B."/>
        </authorList>
    </citation>
    <scope>FUNCTION</scope>
    <scope>SUBCELLULAR LOCATION</scope>
</reference>
<evidence type="ECO:0000269" key="1">
    <source>
    </source>
</evidence>
<proteinExistence type="predicted"/>
<keyword id="KW-0539">Nucleus</keyword>
<keyword id="KW-1185">Reference proteome</keyword>
<keyword id="KW-0804">Transcription</keyword>
<keyword id="KW-0805">Transcription regulation</keyword>
<protein>
    <recommendedName>
        <fullName>Curing of [URE3] protein 1</fullName>
    </recommendedName>
</protein>